<gene>
    <name evidence="6" type="primary">TPS2</name>
</gene>
<feature type="transit peptide" description="Chloroplast" evidence="4">
    <location>
        <begin position="1"/>
        <end position="55"/>
    </location>
</feature>
<feature type="chain" id="PRO_0000363061" description="(+)-alpha-pinene synthase TPS2, chloroplastic">
    <location>
        <begin position="56"/>
        <end position="615"/>
    </location>
</feature>
<feature type="short sequence motif" description="DDXXD motif" evidence="2">
    <location>
        <begin position="367"/>
        <end position="371"/>
    </location>
</feature>
<feature type="binding site" evidence="2">
    <location>
        <position position="330"/>
    </location>
    <ligand>
        <name>(2E)-geranyl diphosphate</name>
        <dbReference type="ChEBI" id="CHEBI:58057"/>
    </ligand>
</feature>
<feature type="binding site" evidence="2">
    <location>
        <position position="367"/>
    </location>
    <ligand>
        <name>(2E)-geranyl diphosphate</name>
        <dbReference type="ChEBI" id="CHEBI:58057"/>
    </ligand>
</feature>
<feature type="binding site" evidence="2">
    <location>
        <position position="367"/>
    </location>
    <ligand>
        <name>Mg(2+)</name>
        <dbReference type="ChEBI" id="CHEBI:18420"/>
        <label>1</label>
    </ligand>
</feature>
<feature type="binding site" evidence="2">
    <location>
        <position position="367"/>
    </location>
    <ligand>
        <name>Mg(2+)</name>
        <dbReference type="ChEBI" id="CHEBI:18420"/>
        <label>2</label>
    </ligand>
</feature>
<feature type="binding site" evidence="2">
    <location>
        <position position="371"/>
    </location>
    <ligand>
        <name>(2E)-geranyl diphosphate</name>
        <dbReference type="ChEBI" id="CHEBI:58057"/>
    </ligand>
</feature>
<feature type="binding site" evidence="2">
    <location>
        <position position="371"/>
    </location>
    <ligand>
        <name>Mg(2+)</name>
        <dbReference type="ChEBI" id="CHEBI:18420"/>
        <label>1</label>
    </ligand>
</feature>
<feature type="binding site" evidence="2">
    <location>
        <position position="371"/>
    </location>
    <ligand>
        <name>Mg(2+)</name>
        <dbReference type="ChEBI" id="CHEBI:18420"/>
        <label>2</label>
    </ligand>
</feature>
<feature type="binding site" evidence="2">
    <location>
        <position position="509"/>
    </location>
    <ligand>
        <name>(2E)-geranyl diphosphate</name>
        <dbReference type="ChEBI" id="CHEBI:58057"/>
    </ligand>
</feature>
<feature type="binding site" evidence="2">
    <location>
        <position position="512"/>
    </location>
    <ligand>
        <name>(2E)-geranyl diphosphate</name>
        <dbReference type="ChEBI" id="CHEBI:58057"/>
    </ligand>
</feature>
<feature type="binding site" evidence="2">
    <location>
        <position position="512"/>
    </location>
    <ligand>
        <name>Mg(2+)</name>
        <dbReference type="ChEBI" id="CHEBI:18420"/>
        <label>3</label>
    </ligand>
</feature>
<feature type="binding site" evidence="2">
    <location>
        <position position="516"/>
    </location>
    <ligand>
        <name>Mg(2+)</name>
        <dbReference type="ChEBI" id="CHEBI:18420"/>
        <label>3</label>
    </ligand>
</feature>
<feature type="binding site" evidence="2">
    <location>
        <position position="520"/>
    </location>
    <ligand>
        <name>Mg(2+)</name>
        <dbReference type="ChEBI" id="CHEBI:18420"/>
        <label>3</label>
    </ligand>
</feature>
<comment type="function">
    <text evidence="5">Involved in monoterpene (C10) olefins biosynthesis, constituants of cannabinoids and terpenoids-rich resins (Ref.1). Catalyzes mainly the conversion of (2E)-geranyl diphosphate to (+)-alpha-pinene, and also produces minor products such as (-)-limonene, (+)-beta-pinene and beta-myrcene (Ref.1).</text>
</comment>
<comment type="catalytic activity">
    <reaction evidence="5">
        <text>(2E)-geranyl diphosphate = (1R,5R)-alpha-pinene + diphosphate</text>
        <dbReference type="Rhea" id="RHEA:32575"/>
        <dbReference type="ChEBI" id="CHEBI:28261"/>
        <dbReference type="ChEBI" id="CHEBI:33019"/>
        <dbReference type="ChEBI" id="CHEBI:58057"/>
        <dbReference type="EC" id="4.2.3.121"/>
    </reaction>
    <physiologicalReaction direction="left-to-right" evidence="5">
        <dbReference type="Rhea" id="RHEA:32576"/>
    </physiologicalReaction>
</comment>
<comment type="catalytic activity">
    <reaction evidence="5">
        <text>(2E)-geranyl diphosphate = (1R,5R)-beta-pinene + diphosphate</text>
        <dbReference type="Rhea" id="RHEA:32579"/>
        <dbReference type="ChEBI" id="CHEBI:33019"/>
        <dbReference type="ChEBI" id="CHEBI:50026"/>
        <dbReference type="ChEBI" id="CHEBI:58057"/>
        <dbReference type="EC" id="4.2.3.122"/>
    </reaction>
    <physiologicalReaction direction="left-to-right" evidence="5">
        <dbReference type="Rhea" id="RHEA:32580"/>
    </physiologicalReaction>
</comment>
<comment type="catalytic activity">
    <reaction evidence="5">
        <text>(2E)-geranyl diphosphate = (4S)-limonene + diphosphate</text>
        <dbReference type="Rhea" id="RHEA:12869"/>
        <dbReference type="ChEBI" id="CHEBI:15383"/>
        <dbReference type="ChEBI" id="CHEBI:33019"/>
        <dbReference type="ChEBI" id="CHEBI:58057"/>
        <dbReference type="EC" id="4.2.3.16"/>
    </reaction>
    <physiologicalReaction direction="left-to-right" evidence="5">
        <dbReference type="Rhea" id="RHEA:12870"/>
    </physiologicalReaction>
</comment>
<comment type="catalytic activity">
    <reaction evidence="5">
        <text>(2E)-geranyl diphosphate = beta-myrcene + diphosphate</text>
        <dbReference type="Rhea" id="RHEA:16965"/>
        <dbReference type="ChEBI" id="CHEBI:17221"/>
        <dbReference type="ChEBI" id="CHEBI:33019"/>
        <dbReference type="ChEBI" id="CHEBI:58057"/>
        <dbReference type="EC" id="4.2.3.15"/>
    </reaction>
    <physiologicalReaction direction="left-to-right" evidence="5">
        <dbReference type="Rhea" id="RHEA:16966"/>
    </physiologicalReaction>
</comment>
<comment type="cofactor">
    <cofactor evidence="1">
        <name>Mg(2+)</name>
        <dbReference type="ChEBI" id="CHEBI:18420"/>
    </cofactor>
    <cofactor evidence="1">
        <name>Mn(2+)</name>
        <dbReference type="ChEBI" id="CHEBI:29035"/>
    </cofactor>
    <text evidence="1">Binds 3 Mg(2+) or Mn(2+) ions per subunit.</text>
</comment>
<comment type="cofactor">
    <cofactor evidence="3">
        <name>K(+)</name>
        <dbReference type="ChEBI" id="CHEBI:29103"/>
    </cofactor>
</comment>
<comment type="biophysicochemical properties">
    <kinetics>
        <KM evidence="5">10.5 uM for Geranyl pyrophosphate</KM>
    </kinetics>
    <phDependence>
        <text evidence="5">Optimum pH is 7.0.</text>
    </phDependence>
    <temperatureDependence>
        <text evidence="5">Optimum temperature is 30 degrees Celsius.</text>
    </temperatureDependence>
</comment>
<comment type="pathway">
    <text evidence="5">Secondary metabolite biosynthesis; terpenoid biosynthesis.</text>
</comment>
<comment type="pathway">
    <text evidence="5">Terpene metabolism; (-)-alpha-pinene biosynthesis; (-)-alpha-pinene from geranyl diphosphate: step 1/1.</text>
</comment>
<comment type="subcellular location">
    <subcellularLocation>
        <location evidence="4">Plastid</location>
        <location evidence="4">Chloroplast</location>
    </subcellularLocation>
</comment>
<comment type="tissue specificity">
    <text evidence="5">Trichome.</text>
</comment>
<comment type="domain">
    <text evidence="2">The Asp-Asp-Xaa-Xaa-Asp/Glu (DDXXD/E) motif is important for the catalytic activity, presumably through binding to Mg(2+).</text>
</comment>
<comment type="similarity">
    <text evidence="7">Belongs to the terpene synthase family. Tpsb subfamily.</text>
</comment>
<name>TPS2_CANSA</name>
<dbReference type="EC" id="4.2.3.121" evidence="5"/>
<dbReference type="EC" id="4.2.3.122" evidence="5"/>
<dbReference type="EC" id="4.2.3.16" evidence="5"/>
<dbReference type="EC" id="4.2.3.15" evidence="5"/>
<dbReference type="EMBL" id="DQ839405">
    <property type="protein sequence ID" value="ABI21838.1"/>
    <property type="molecule type" value="mRNA"/>
</dbReference>
<dbReference type="SMR" id="A7IZZ2"/>
<dbReference type="UniPathway" id="UPA00213"/>
<dbReference type="UniPathway" id="UPA00985">
    <property type="reaction ID" value="UER00927"/>
</dbReference>
<dbReference type="Proteomes" id="UP000596661">
    <property type="component" value="Unplaced"/>
</dbReference>
<dbReference type="GO" id="GO:0009507">
    <property type="term" value="C:chloroplast"/>
    <property type="evidence" value="ECO:0007669"/>
    <property type="project" value="UniProtKB-SubCell"/>
</dbReference>
<dbReference type="GO" id="GO:0050552">
    <property type="term" value="F:(4S)-limonene synthase activity"/>
    <property type="evidence" value="ECO:0007669"/>
    <property type="project" value="RHEA"/>
</dbReference>
<dbReference type="GO" id="GO:0000287">
    <property type="term" value="F:magnesium ion binding"/>
    <property type="evidence" value="ECO:0007669"/>
    <property type="project" value="InterPro"/>
</dbReference>
<dbReference type="GO" id="GO:0050551">
    <property type="term" value="F:myrcene synthase activity"/>
    <property type="evidence" value="ECO:0007669"/>
    <property type="project" value="RHEA"/>
</dbReference>
<dbReference type="GO" id="GO:0050550">
    <property type="term" value="F:pinene synthase activity"/>
    <property type="evidence" value="ECO:0007669"/>
    <property type="project" value="UniProtKB-EC"/>
</dbReference>
<dbReference type="GO" id="GO:0046248">
    <property type="term" value="P:alpha-pinene biosynthetic process"/>
    <property type="evidence" value="ECO:0007669"/>
    <property type="project" value="UniProtKB-UniPathway"/>
</dbReference>
<dbReference type="GO" id="GO:0016102">
    <property type="term" value="P:diterpenoid biosynthetic process"/>
    <property type="evidence" value="ECO:0007669"/>
    <property type="project" value="InterPro"/>
</dbReference>
<dbReference type="CDD" id="cd00684">
    <property type="entry name" value="Terpene_cyclase_plant_C1"/>
    <property type="match status" value="1"/>
</dbReference>
<dbReference type="FunFam" id="1.10.600.10:FF:000007">
    <property type="entry name" value="Isoprene synthase, chloroplastic"/>
    <property type="match status" value="1"/>
</dbReference>
<dbReference type="FunFam" id="1.50.10.130:FF:000001">
    <property type="entry name" value="Isoprene synthase, chloroplastic"/>
    <property type="match status" value="1"/>
</dbReference>
<dbReference type="Gene3D" id="1.10.600.10">
    <property type="entry name" value="Farnesyl Diphosphate Synthase"/>
    <property type="match status" value="1"/>
</dbReference>
<dbReference type="Gene3D" id="1.50.10.130">
    <property type="entry name" value="Terpene synthase, N-terminal domain"/>
    <property type="match status" value="1"/>
</dbReference>
<dbReference type="InterPro" id="IPR008949">
    <property type="entry name" value="Isoprenoid_synthase_dom_sf"/>
</dbReference>
<dbReference type="InterPro" id="IPR034741">
    <property type="entry name" value="Terpene_cyclase-like_1_C"/>
</dbReference>
<dbReference type="InterPro" id="IPR044814">
    <property type="entry name" value="Terpene_cyclase_plant_C1"/>
</dbReference>
<dbReference type="InterPro" id="IPR001906">
    <property type="entry name" value="Terpene_synth_N"/>
</dbReference>
<dbReference type="InterPro" id="IPR036965">
    <property type="entry name" value="Terpene_synth_N_sf"/>
</dbReference>
<dbReference type="InterPro" id="IPR050148">
    <property type="entry name" value="Terpene_synthase-like"/>
</dbReference>
<dbReference type="InterPro" id="IPR005630">
    <property type="entry name" value="Terpene_synthase_metal-bd"/>
</dbReference>
<dbReference type="InterPro" id="IPR008930">
    <property type="entry name" value="Terpenoid_cyclase/PrenylTrfase"/>
</dbReference>
<dbReference type="PANTHER" id="PTHR31225">
    <property type="entry name" value="OS04G0344100 PROTEIN-RELATED"/>
    <property type="match status" value="1"/>
</dbReference>
<dbReference type="PANTHER" id="PTHR31225:SF9">
    <property type="entry name" value="TERPENE SYNTHASE 10"/>
    <property type="match status" value="1"/>
</dbReference>
<dbReference type="Pfam" id="PF01397">
    <property type="entry name" value="Terpene_synth"/>
    <property type="match status" value="1"/>
</dbReference>
<dbReference type="Pfam" id="PF03936">
    <property type="entry name" value="Terpene_synth_C"/>
    <property type="match status" value="1"/>
</dbReference>
<dbReference type="SFLD" id="SFLDS00005">
    <property type="entry name" value="Isoprenoid_Synthase_Type_I"/>
    <property type="match status" value="1"/>
</dbReference>
<dbReference type="SFLD" id="SFLDG01019">
    <property type="entry name" value="Terpene_Cyclase_Like_1_C_Termi"/>
    <property type="match status" value="1"/>
</dbReference>
<dbReference type="SUPFAM" id="SSF48239">
    <property type="entry name" value="Terpenoid cyclases/Protein prenyltransferases"/>
    <property type="match status" value="1"/>
</dbReference>
<dbReference type="SUPFAM" id="SSF48576">
    <property type="entry name" value="Terpenoid synthases"/>
    <property type="match status" value="1"/>
</dbReference>
<sequence length="615" mass="71842">MHCMAVRHFAPSSSLSIFSSTNINNHFFGREIFTPKTSNITTKKSRSRPNCNPIQCSLAKSPSSDTSTIVRRSANYDPPIWSFDFIQSLPCKYKGEPYTSRSNKLKEEVKKMLVGMENSLVQLELIDTLQRLGISYHFENEIISILKEYFTNISTNKNPKYDLYATALEFRLLREYGYAIPQEIFNDFKDETGKFKASIKNDDIKGVLALYEASFYVKNGENILEEARVFTTEYLKRYVMMIDQNIILNDNMAILVRHALEMPLHWRTIRAEAKWFIEEYEKTQDKNGTLLEFAKLDFNMLQSIFQEDLKHVSRWWEHSELGKNKMVYARDRLVEAFLWQVGVRFEPQFSHFRRISARIYALITIIDDIYDVYGTLEELELFTKAVERWDAKTIHELPDYMKLPFFTLFNTVNEMAYDVLEEHNFVTVEYLKNSWAELCRCYLEEAKWFYSGYKPTLKKYIENASLSIGGQIIFVYAFFSLTKSITNEALESLQEGHHAACRQGSLMLRLADDLGTLSDEMKRGDVPKSIQCYMHDTGASEDEAREHIKFLISEIWKEMNDEDEYNSIFSKEFVQACKNLGRMSLFMYQHGDGHASQDSHSRKRISDLIINPIPL</sequence>
<protein>
    <recommendedName>
        <fullName evidence="6">(+)-alpha-pinene synthase TPS2, chloroplastic</fullName>
        <ecNumber evidence="5">4.2.3.121</ecNumber>
    </recommendedName>
    <alternativeName>
        <fullName evidence="6">(+)-beta-pinene synthase TPS2</fullName>
        <ecNumber evidence="5">4.2.3.122</ecNumber>
    </alternativeName>
    <alternativeName>
        <fullName evidence="6">(-)-limonene synthase TPS2</fullName>
        <shortName evidence="6">(-)-(4S)-limonene synthase</shortName>
        <ecNumber evidence="5">4.2.3.16</ecNumber>
    </alternativeName>
    <alternativeName>
        <fullName evidence="6">Myrcene synthase TPS2</fullName>
        <ecNumber evidence="5">4.2.3.15</ecNumber>
    </alternativeName>
    <alternativeName>
        <fullName evidence="6">Terpene synthase 2</fullName>
        <shortName evidence="6">CsTPS2</shortName>
    </alternativeName>
</protein>
<keyword id="KW-0150">Chloroplast</keyword>
<keyword id="KW-0456">Lyase</keyword>
<keyword id="KW-0460">Magnesium</keyword>
<keyword id="KW-0479">Metal-binding</keyword>
<keyword id="KW-0934">Plastid</keyword>
<keyword id="KW-0809">Transit peptide</keyword>
<evidence type="ECO:0000250" key="1">
    <source>
        <dbReference type="UniProtKB" id="A0A1C9J6A7"/>
    </source>
</evidence>
<evidence type="ECO:0000250" key="2">
    <source>
        <dbReference type="UniProtKB" id="Q40577"/>
    </source>
</evidence>
<evidence type="ECO:0000250" key="3">
    <source>
        <dbReference type="UniProtKB" id="Q84LB2"/>
    </source>
</evidence>
<evidence type="ECO:0000255" key="4"/>
<evidence type="ECO:0000269" key="5">
    <source ref="1"/>
</evidence>
<evidence type="ECO:0000303" key="6">
    <source ref="1"/>
</evidence>
<evidence type="ECO:0000305" key="7"/>
<organism>
    <name type="scientific">Cannabis sativa</name>
    <name type="common">Hemp</name>
    <name type="synonym">Marijuana</name>
    <dbReference type="NCBI Taxonomy" id="3483"/>
    <lineage>
        <taxon>Eukaryota</taxon>
        <taxon>Viridiplantae</taxon>
        <taxon>Streptophyta</taxon>
        <taxon>Embryophyta</taxon>
        <taxon>Tracheophyta</taxon>
        <taxon>Spermatophyta</taxon>
        <taxon>Magnoliopsida</taxon>
        <taxon>eudicotyledons</taxon>
        <taxon>Gunneridae</taxon>
        <taxon>Pentapetalae</taxon>
        <taxon>rosids</taxon>
        <taxon>fabids</taxon>
        <taxon>Rosales</taxon>
        <taxon>Cannabaceae</taxon>
        <taxon>Cannabis</taxon>
    </lineage>
</organism>
<reference key="1">
    <citation type="journal article" date="2007" name="Nat. Prod. Commun.">
        <title>Functional expression and characterization of trichome-specific (-)-limonene synthase and a (+)-alpha-pinene synthase from Cannabis sativa.</title>
        <authorList>
            <person name="Guennewich N."/>
            <person name="Page J.E."/>
            <person name="Koellner T.G."/>
            <person name="Degenhardt J."/>
            <person name="Kutchan T.M."/>
        </authorList>
    </citation>
    <scope>NUCLEOTIDE SEQUENCE [MRNA]</scope>
    <scope>FUNCTION</scope>
    <scope>CATALYTIC ACTIVITY</scope>
    <scope>TISSUE SPECIFICITY</scope>
    <scope>BIOPHYSICOCHEMICAL PROPERTIES</scope>
    <scope>PATHWAY</scope>
    <source>
        <strain>cv. Skunk</strain>
        <tissue>Trichome gland</tissue>
    </source>
</reference>
<proteinExistence type="evidence at protein level"/>
<accession>A7IZZ2</accession>